<dbReference type="EC" id="2.8.1.12" evidence="2"/>
<dbReference type="EMBL" id="AAFI02000007">
    <property type="protein sequence ID" value="EAL71511.1"/>
    <property type="molecule type" value="Genomic_DNA"/>
</dbReference>
<dbReference type="RefSeq" id="XP_645446.1">
    <property type="nucleotide sequence ID" value="XM_640354.1"/>
</dbReference>
<dbReference type="SMR" id="Q86HF4"/>
<dbReference type="FunCoup" id="Q86HF4">
    <property type="interactions" value="262"/>
</dbReference>
<dbReference type="STRING" id="44689.Q86HF4"/>
<dbReference type="PaxDb" id="44689-DDB0267170"/>
<dbReference type="EnsemblProtists" id="EAL71511">
    <property type="protein sequence ID" value="EAL71511"/>
    <property type="gene ID" value="DDB_G0271864"/>
</dbReference>
<dbReference type="GeneID" id="8618186"/>
<dbReference type="KEGG" id="ddi:DDB_G0271864"/>
<dbReference type="dictyBase" id="DDB_G0271864">
    <property type="gene designation" value="mocs2l"/>
</dbReference>
<dbReference type="VEuPathDB" id="AmoebaDB:DDB_G0271864"/>
<dbReference type="eggNOG" id="KOG3307">
    <property type="taxonomic scope" value="Eukaryota"/>
</dbReference>
<dbReference type="HOGENOM" id="CLU_089568_0_1_1"/>
<dbReference type="InParanoid" id="Q86HF4"/>
<dbReference type="OMA" id="WKHQFFA"/>
<dbReference type="PhylomeDB" id="Q86HF4"/>
<dbReference type="UniPathway" id="UPA00344"/>
<dbReference type="PRO" id="PR:Q86HF4"/>
<dbReference type="Proteomes" id="UP000002195">
    <property type="component" value="Chromosome 2"/>
</dbReference>
<dbReference type="GO" id="GO:0005829">
    <property type="term" value="C:cytosol"/>
    <property type="evidence" value="ECO:0000250"/>
    <property type="project" value="UniProtKB"/>
</dbReference>
<dbReference type="GO" id="GO:1990140">
    <property type="term" value="C:molybdopterin synthase complex"/>
    <property type="evidence" value="ECO:0000250"/>
    <property type="project" value="UniProtKB"/>
</dbReference>
<dbReference type="GO" id="GO:0030366">
    <property type="term" value="F:molybdopterin synthase activity"/>
    <property type="evidence" value="ECO:0007669"/>
    <property type="project" value="UniProtKB-UniRule"/>
</dbReference>
<dbReference type="GO" id="GO:0006777">
    <property type="term" value="P:Mo-molybdopterin cofactor biosynthetic process"/>
    <property type="evidence" value="ECO:0000250"/>
    <property type="project" value="UniProtKB"/>
</dbReference>
<dbReference type="CDD" id="cd00756">
    <property type="entry name" value="MoaE"/>
    <property type="match status" value="1"/>
</dbReference>
<dbReference type="FunFam" id="3.90.1170.40:FF:000012">
    <property type="entry name" value="Molybdopterin synthase catalytic subunit"/>
    <property type="match status" value="1"/>
</dbReference>
<dbReference type="Gene3D" id="3.90.1170.40">
    <property type="entry name" value="Molybdopterin biosynthesis MoaE subunit"/>
    <property type="match status" value="1"/>
</dbReference>
<dbReference type="HAMAP" id="MF_03052">
    <property type="entry name" value="MOC2B"/>
    <property type="match status" value="1"/>
</dbReference>
<dbReference type="InterPro" id="IPR036563">
    <property type="entry name" value="MoaE_sf"/>
</dbReference>
<dbReference type="InterPro" id="IPR028888">
    <property type="entry name" value="MOCS2B_euk"/>
</dbReference>
<dbReference type="InterPro" id="IPR003448">
    <property type="entry name" value="Mopterin_biosynth_MoaE"/>
</dbReference>
<dbReference type="PANTHER" id="PTHR23404">
    <property type="entry name" value="MOLYBDOPTERIN SYNTHASE RELATED"/>
    <property type="match status" value="1"/>
</dbReference>
<dbReference type="Pfam" id="PF02391">
    <property type="entry name" value="MoaE"/>
    <property type="match status" value="1"/>
</dbReference>
<dbReference type="SUPFAM" id="SSF54690">
    <property type="entry name" value="Molybdopterin synthase subunit MoaE"/>
    <property type="match status" value="1"/>
</dbReference>
<evidence type="ECO:0000250" key="1"/>
<evidence type="ECO:0000255" key="2">
    <source>
        <dbReference type="HAMAP-Rule" id="MF_03052"/>
    </source>
</evidence>
<accession>Q86HF4</accession>
<accession>Q55AG5</accession>
<feature type="chain" id="PRO_0000331261" description="Molybdopterin synthase catalytic subunit">
    <location>
        <begin position="1"/>
        <end position="158"/>
    </location>
</feature>
<feature type="binding site" evidence="2">
    <location>
        <begin position="107"/>
        <end position="108"/>
    </location>
    <ligand>
        <name>substrate</name>
    </ligand>
</feature>
<feature type="binding site" evidence="2">
    <location>
        <position position="123"/>
    </location>
    <ligand>
        <name>substrate</name>
    </ligand>
</feature>
<feature type="binding site" evidence="2">
    <location>
        <begin position="130"/>
        <end position="132"/>
    </location>
    <ligand>
        <name>substrate</name>
    </ligand>
</feature>
<organism>
    <name type="scientific">Dictyostelium discoideum</name>
    <name type="common">Social amoeba</name>
    <dbReference type="NCBI Taxonomy" id="44689"/>
    <lineage>
        <taxon>Eukaryota</taxon>
        <taxon>Amoebozoa</taxon>
        <taxon>Evosea</taxon>
        <taxon>Eumycetozoa</taxon>
        <taxon>Dictyostelia</taxon>
        <taxon>Dictyosteliales</taxon>
        <taxon>Dictyosteliaceae</taxon>
        <taxon>Dictyostelium</taxon>
    </lineage>
</organism>
<name>MOC2B_DICDI</name>
<proteinExistence type="inferred from homology"/>
<protein>
    <recommendedName>
        <fullName evidence="2">Molybdopterin synthase catalytic subunit</fullName>
        <ecNumber evidence="2">2.8.1.12</ecNumber>
    </recommendedName>
    <alternativeName>
        <fullName>MOCO1-B</fullName>
    </alternativeName>
    <alternativeName>
        <fullName evidence="2">Molybdenum cofactor synthesis protein 2 large subunit</fullName>
    </alternativeName>
    <alternativeName>
        <fullName evidence="2">Molybdenum cofactor synthesis protein 2B</fullName>
        <shortName evidence="2">MOCS2B</shortName>
    </alternativeName>
    <alternativeName>
        <fullName>Molybdopterin synthase large subunit</fullName>
        <shortName>MPT synthase large subunit</shortName>
    </alternativeName>
</protein>
<reference key="1">
    <citation type="journal article" date="2002" name="Nature">
        <title>Sequence and analysis of chromosome 2 of Dictyostelium discoideum.</title>
        <authorList>
            <person name="Gloeckner G."/>
            <person name="Eichinger L."/>
            <person name="Szafranski K."/>
            <person name="Pachebat J.A."/>
            <person name="Bankier A.T."/>
            <person name="Dear P.H."/>
            <person name="Lehmann R."/>
            <person name="Baumgart C."/>
            <person name="Parra G."/>
            <person name="Abril J.F."/>
            <person name="Guigo R."/>
            <person name="Kumpf K."/>
            <person name="Tunggal B."/>
            <person name="Cox E.C."/>
            <person name="Quail M.A."/>
            <person name="Platzer M."/>
            <person name="Rosenthal A."/>
            <person name="Noegel A.A."/>
        </authorList>
    </citation>
    <scope>NUCLEOTIDE SEQUENCE [LARGE SCALE GENOMIC DNA]</scope>
    <source>
        <strain>AX4</strain>
    </source>
</reference>
<reference key="2">
    <citation type="journal article" date="2005" name="Nature">
        <title>The genome of the social amoeba Dictyostelium discoideum.</title>
        <authorList>
            <person name="Eichinger L."/>
            <person name="Pachebat J.A."/>
            <person name="Gloeckner G."/>
            <person name="Rajandream M.A."/>
            <person name="Sucgang R."/>
            <person name="Berriman M."/>
            <person name="Song J."/>
            <person name="Olsen R."/>
            <person name="Szafranski K."/>
            <person name="Xu Q."/>
            <person name="Tunggal B."/>
            <person name="Kummerfeld S."/>
            <person name="Madera M."/>
            <person name="Konfortov B.A."/>
            <person name="Rivero F."/>
            <person name="Bankier A.T."/>
            <person name="Lehmann R."/>
            <person name="Hamlin N."/>
            <person name="Davies R."/>
            <person name="Gaudet P."/>
            <person name="Fey P."/>
            <person name="Pilcher K."/>
            <person name="Chen G."/>
            <person name="Saunders D."/>
            <person name="Sodergren E.J."/>
            <person name="Davis P."/>
            <person name="Kerhornou A."/>
            <person name="Nie X."/>
            <person name="Hall N."/>
            <person name="Anjard C."/>
            <person name="Hemphill L."/>
            <person name="Bason N."/>
            <person name="Farbrother P."/>
            <person name="Desany B."/>
            <person name="Just E."/>
            <person name="Morio T."/>
            <person name="Rost R."/>
            <person name="Churcher C.M."/>
            <person name="Cooper J."/>
            <person name="Haydock S."/>
            <person name="van Driessche N."/>
            <person name="Cronin A."/>
            <person name="Goodhead I."/>
            <person name="Muzny D.M."/>
            <person name="Mourier T."/>
            <person name="Pain A."/>
            <person name="Lu M."/>
            <person name="Harper D."/>
            <person name="Lindsay R."/>
            <person name="Hauser H."/>
            <person name="James K.D."/>
            <person name="Quiles M."/>
            <person name="Madan Babu M."/>
            <person name="Saito T."/>
            <person name="Buchrieser C."/>
            <person name="Wardroper A."/>
            <person name="Felder M."/>
            <person name="Thangavelu M."/>
            <person name="Johnson D."/>
            <person name="Knights A."/>
            <person name="Loulseged H."/>
            <person name="Mungall K.L."/>
            <person name="Oliver K."/>
            <person name="Price C."/>
            <person name="Quail M.A."/>
            <person name="Urushihara H."/>
            <person name="Hernandez J."/>
            <person name="Rabbinowitsch E."/>
            <person name="Steffen D."/>
            <person name="Sanders M."/>
            <person name="Ma J."/>
            <person name="Kohara Y."/>
            <person name="Sharp S."/>
            <person name="Simmonds M.N."/>
            <person name="Spiegler S."/>
            <person name="Tivey A."/>
            <person name="Sugano S."/>
            <person name="White B."/>
            <person name="Walker D."/>
            <person name="Woodward J.R."/>
            <person name="Winckler T."/>
            <person name="Tanaka Y."/>
            <person name="Shaulsky G."/>
            <person name="Schleicher M."/>
            <person name="Weinstock G.M."/>
            <person name="Rosenthal A."/>
            <person name="Cox E.C."/>
            <person name="Chisholm R.L."/>
            <person name="Gibbs R.A."/>
            <person name="Loomis W.F."/>
            <person name="Platzer M."/>
            <person name="Kay R.R."/>
            <person name="Williams J.G."/>
            <person name="Dear P.H."/>
            <person name="Noegel A.A."/>
            <person name="Barrell B.G."/>
            <person name="Kuspa A."/>
        </authorList>
    </citation>
    <scope>NUCLEOTIDE SEQUENCE [LARGE SCALE GENOMIC DNA]</scope>
    <source>
        <strain>AX4</strain>
    </source>
</reference>
<sequence length="158" mass="18017">MSKESRIFIEISENIIDLNYWYKIVSDDSSGATSSFLGTTRNEFKGKSVERLEYETYEPMAIKEIEKICKTILNGFENDIKKIGIVHRIGNVPVGESSILIVISSGHRKSSLEAVHYAIDTIKSTVPIWKKEFYTDGSENQWKGNCESCHFNNNNHPH</sequence>
<keyword id="KW-0963">Cytoplasm</keyword>
<keyword id="KW-0501">Molybdenum cofactor biosynthesis</keyword>
<keyword id="KW-1185">Reference proteome</keyword>
<keyword id="KW-0808">Transferase</keyword>
<gene>
    <name type="primary">mocs2l</name>
    <name type="synonym">moco1l</name>
    <name type="ORF">DDB_G0271864</name>
</gene>
<comment type="function">
    <text evidence="1">Catalytic subunit of the molybdopterin synthase complex, a complex that catalyzes the conversion of precursor Z into molybdopterin. Acts by mediating the incorporation of 2 sulfur atoms from thiocarboxylated mocs2s into precursor Z to generate a dithiolene group (By similarity).</text>
</comment>
<comment type="catalytic activity">
    <reaction evidence="2">
        <text>2 [molybdopterin-synthase sulfur-carrier protein]-C-terminal-Gly-aminoethanethioate + cyclic pyranopterin phosphate + H2O = molybdopterin + 2 [molybdopterin-synthase sulfur-carrier protein]-C-terminal Gly-Gly + 2 H(+)</text>
        <dbReference type="Rhea" id="RHEA:26333"/>
        <dbReference type="Rhea" id="RHEA-COMP:12202"/>
        <dbReference type="Rhea" id="RHEA-COMP:19907"/>
        <dbReference type="ChEBI" id="CHEBI:15377"/>
        <dbReference type="ChEBI" id="CHEBI:15378"/>
        <dbReference type="ChEBI" id="CHEBI:58698"/>
        <dbReference type="ChEBI" id="CHEBI:59648"/>
        <dbReference type="ChEBI" id="CHEBI:90778"/>
        <dbReference type="ChEBI" id="CHEBI:232372"/>
        <dbReference type="EC" id="2.8.1.12"/>
    </reaction>
</comment>
<comment type="pathway">
    <text evidence="2">Cofactor biosynthesis; molybdopterin biosynthesis.</text>
</comment>
<comment type="subunit">
    <text evidence="1">Heterotetramer; composed of 2 small (mocs2s) and 2 large (mocs2l) subunits.</text>
</comment>
<comment type="subcellular location">
    <subcellularLocation>
        <location evidence="2">Cytoplasm</location>
    </subcellularLocation>
</comment>
<comment type="similarity">
    <text evidence="2">Belongs to the MoaE family. MOCS2B subfamily.</text>
</comment>